<proteinExistence type="inferred from homology"/>
<dbReference type="EC" id="1.1.1.290" evidence="1"/>
<dbReference type="EMBL" id="BA000037">
    <property type="protein sequence ID" value="BAC95192.1"/>
    <property type="status" value="ALT_INIT"/>
    <property type="molecule type" value="Genomic_DNA"/>
</dbReference>
<dbReference type="RefSeq" id="WP_043877402.1">
    <property type="nucleotide sequence ID" value="NC_005139.1"/>
</dbReference>
<dbReference type="SMR" id="Q7MIT6"/>
<dbReference type="STRING" id="672.VV93_v1c21310"/>
<dbReference type="KEGG" id="vvy:VV2428"/>
<dbReference type="PATRIC" id="fig|196600.6.peg.2434"/>
<dbReference type="eggNOG" id="COG0111">
    <property type="taxonomic scope" value="Bacteria"/>
</dbReference>
<dbReference type="HOGENOM" id="CLU_019796_4_0_6"/>
<dbReference type="UniPathway" id="UPA00244">
    <property type="reaction ID" value="UER00310"/>
</dbReference>
<dbReference type="Proteomes" id="UP000002675">
    <property type="component" value="Chromosome I"/>
</dbReference>
<dbReference type="GO" id="GO:0005737">
    <property type="term" value="C:cytoplasm"/>
    <property type="evidence" value="ECO:0007669"/>
    <property type="project" value="UniProtKB-SubCell"/>
</dbReference>
<dbReference type="GO" id="GO:0033711">
    <property type="term" value="F:4-phosphoerythronate dehydrogenase activity"/>
    <property type="evidence" value="ECO:0007669"/>
    <property type="project" value="UniProtKB-EC"/>
</dbReference>
<dbReference type="GO" id="GO:0051287">
    <property type="term" value="F:NAD binding"/>
    <property type="evidence" value="ECO:0007669"/>
    <property type="project" value="InterPro"/>
</dbReference>
<dbReference type="GO" id="GO:0046983">
    <property type="term" value="F:protein dimerization activity"/>
    <property type="evidence" value="ECO:0007669"/>
    <property type="project" value="InterPro"/>
</dbReference>
<dbReference type="GO" id="GO:0008615">
    <property type="term" value="P:pyridoxine biosynthetic process"/>
    <property type="evidence" value="ECO:0007669"/>
    <property type="project" value="UniProtKB-UniRule"/>
</dbReference>
<dbReference type="CDD" id="cd12158">
    <property type="entry name" value="ErythrP_dh"/>
    <property type="match status" value="1"/>
</dbReference>
<dbReference type="FunFam" id="3.40.50.720:FF:000093">
    <property type="entry name" value="Erythronate-4-phosphate dehydrogenase"/>
    <property type="match status" value="1"/>
</dbReference>
<dbReference type="Gene3D" id="3.30.1370.170">
    <property type="match status" value="1"/>
</dbReference>
<dbReference type="Gene3D" id="3.40.50.720">
    <property type="entry name" value="NAD(P)-binding Rossmann-like Domain"/>
    <property type="match status" value="2"/>
</dbReference>
<dbReference type="HAMAP" id="MF_01825">
    <property type="entry name" value="PdxB"/>
    <property type="match status" value="1"/>
</dbReference>
<dbReference type="InterPro" id="IPR050418">
    <property type="entry name" value="D-iso_2-hydroxyacid_DH_PdxB"/>
</dbReference>
<dbReference type="InterPro" id="IPR006139">
    <property type="entry name" value="D-isomer_2_OHA_DH_cat_dom"/>
</dbReference>
<dbReference type="InterPro" id="IPR029753">
    <property type="entry name" value="D-isomer_DH_CS"/>
</dbReference>
<dbReference type="InterPro" id="IPR006140">
    <property type="entry name" value="D-isomer_DH_NAD-bd"/>
</dbReference>
<dbReference type="InterPro" id="IPR020921">
    <property type="entry name" value="Erythronate-4-P_DHase"/>
</dbReference>
<dbReference type="InterPro" id="IPR024531">
    <property type="entry name" value="Erythronate-4-P_DHase_dimer"/>
</dbReference>
<dbReference type="InterPro" id="IPR036291">
    <property type="entry name" value="NAD(P)-bd_dom_sf"/>
</dbReference>
<dbReference type="InterPro" id="IPR038251">
    <property type="entry name" value="PdxB_dimer_sf"/>
</dbReference>
<dbReference type="PANTHER" id="PTHR43761:SF1">
    <property type="entry name" value="D-ISOMER SPECIFIC 2-HYDROXYACID DEHYDROGENASE CATALYTIC DOMAIN-CONTAINING PROTEIN-RELATED"/>
    <property type="match status" value="1"/>
</dbReference>
<dbReference type="PANTHER" id="PTHR43761">
    <property type="entry name" value="D-ISOMER SPECIFIC 2-HYDROXYACID DEHYDROGENASE FAMILY PROTEIN (AFU_ORTHOLOGUE AFUA_1G13630)"/>
    <property type="match status" value="1"/>
</dbReference>
<dbReference type="Pfam" id="PF00389">
    <property type="entry name" value="2-Hacid_dh"/>
    <property type="match status" value="1"/>
</dbReference>
<dbReference type="Pfam" id="PF02826">
    <property type="entry name" value="2-Hacid_dh_C"/>
    <property type="match status" value="1"/>
</dbReference>
<dbReference type="Pfam" id="PF11890">
    <property type="entry name" value="DUF3410"/>
    <property type="match status" value="1"/>
</dbReference>
<dbReference type="SUPFAM" id="SSF52283">
    <property type="entry name" value="Formate/glycerate dehydrogenase catalytic domain-like"/>
    <property type="match status" value="1"/>
</dbReference>
<dbReference type="SUPFAM" id="SSF51735">
    <property type="entry name" value="NAD(P)-binding Rossmann-fold domains"/>
    <property type="match status" value="1"/>
</dbReference>
<dbReference type="PROSITE" id="PS00671">
    <property type="entry name" value="D_2_HYDROXYACID_DH_3"/>
    <property type="match status" value="1"/>
</dbReference>
<feature type="chain" id="PRO_0000075994" description="Erythronate-4-phosphate dehydrogenase">
    <location>
        <begin position="1"/>
        <end position="377"/>
    </location>
</feature>
<feature type="active site" evidence="1">
    <location>
        <position position="209"/>
    </location>
</feature>
<feature type="active site" evidence="1">
    <location>
        <position position="238"/>
    </location>
</feature>
<feature type="active site" description="Proton donor" evidence="1">
    <location>
        <position position="255"/>
    </location>
</feature>
<feature type="binding site" evidence="1">
    <location>
        <position position="45"/>
    </location>
    <ligand>
        <name>substrate</name>
    </ligand>
</feature>
<feature type="binding site" evidence="1">
    <location>
        <position position="67"/>
    </location>
    <ligand>
        <name>substrate</name>
    </ligand>
</feature>
<feature type="binding site" evidence="1">
    <location>
        <begin position="127"/>
        <end position="128"/>
    </location>
    <ligand>
        <name>NAD(+)</name>
        <dbReference type="ChEBI" id="CHEBI:57540"/>
    </ligand>
</feature>
<feature type="binding site" evidence="1">
    <location>
        <position position="147"/>
    </location>
    <ligand>
        <name>NAD(+)</name>
        <dbReference type="ChEBI" id="CHEBI:57540"/>
    </ligand>
</feature>
<feature type="binding site" evidence="1">
    <location>
        <position position="176"/>
    </location>
    <ligand>
        <name>NAD(+)</name>
        <dbReference type="ChEBI" id="CHEBI:57540"/>
    </ligand>
</feature>
<feature type="binding site" evidence="1">
    <location>
        <position position="233"/>
    </location>
    <ligand>
        <name>NAD(+)</name>
        <dbReference type="ChEBI" id="CHEBI:57540"/>
    </ligand>
</feature>
<feature type="binding site" evidence="1">
    <location>
        <position position="258"/>
    </location>
    <ligand>
        <name>NAD(+)</name>
        <dbReference type="ChEBI" id="CHEBI:57540"/>
    </ligand>
</feature>
<feature type="binding site" evidence="1">
    <location>
        <position position="259"/>
    </location>
    <ligand>
        <name>substrate</name>
    </ligand>
</feature>
<comment type="function">
    <text evidence="1">Catalyzes the oxidation of erythronate-4-phosphate to 3-hydroxy-2-oxo-4-phosphonooxybutanoate.</text>
</comment>
<comment type="catalytic activity">
    <reaction evidence="1">
        <text>4-phospho-D-erythronate + NAD(+) = (R)-3-hydroxy-2-oxo-4-phosphooxybutanoate + NADH + H(+)</text>
        <dbReference type="Rhea" id="RHEA:18829"/>
        <dbReference type="ChEBI" id="CHEBI:15378"/>
        <dbReference type="ChEBI" id="CHEBI:57540"/>
        <dbReference type="ChEBI" id="CHEBI:57945"/>
        <dbReference type="ChEBI" id="CHEBI:58538"/>
        <dbReference type="ChEBI" id="CHEBI:58766"/>
        <dbReference type="EC" id="1.1.1.290"/>
    </reaction>
</comment>
<comment type="pathway">
    <text evidence="1">Cofactor biosynthesis; pyridoxine 5'-phosphate biosynthesis; pyridoxine 5'-phosphate from D-erythrose 4-phosphate: step 2/5.</text>
</comment>
<comment type="subunit">
    <text evidence="1">Homodimer.</text>
</comment>
<comment type="subcellular location">
    <subcellularLocation>
        <location evidence="1">Cytoplasm</location>
    </subcellularLocation>
</comment>
<comment type="similarity">
    <text evidence="1">Belongs to the D-isomer specific 2-hydroxyacid dehydrogenase family. PdxB subfamily.</text>
</comment>
<comment type="sequence caution" evidence="2">
    <conflict type="erroneous initiation">
        <sequence resource="EMBL-CDS" id="BAC95192"/>
    </conflict>
</comment>
<organism>
    <name type="scientific">Vibrio vulnificus (strain YJ016)</name>
    <dbReference type="NCBI Taxonomy" id="196600"/>
    <lineage>
        <taxon>Bacteria</taxon>
        <taxon>Pseudomonadati</taxon>
        <taxon>Pseudomonadota</taxon>
        <taxon>Gammaproteobacteria</taxon>
        <taxon>Vibrionales</taxon>
        <taxon>Vibrionaceae</taxon>
        <taxon>Vibrio</taxon>
    </lineage>
</organism>
<sequence length="377" mass="41775">MKILVDENMPYAEMLFSQLGEVILKPGRSLTADDLVDIDALMIRSVTKVNAALISKASKLKFVGTATAGMDHVDQALLKEKGIYFTAAPGCNKVGVAEYVFSVMMVLAQQQGFSVFEQTVGIVGAGQVGSYLQQCLQGIGIKVLINDPFKQEEGDEREFTSLDRLLQEADVITLHTPITRDGKYPTHHLINKEILNSLRADQILINAARGPVVDNQALKHRLQQADGFTAALDVFEFEPEVDMELLPLLAFATPHVAGYGLEGKARGTTMIFNSYCEFIGNELRAHASDLLPTAPVPKVVLDRKWDEATLHTLTQMVYDVRRDDAQFRREIGAPGAFDLMRKEYWDRREYSAVTLVGSAQCRLKPLAKLGFQVEVSQ</sequence>
<name>PDXB_VIBVY</name>
<reference key="1">
    <citation type="journal article" date="2003" name="Genome Res.">
        <title>Comparative genome analysis of Vibrio vulnificus, a marine pathogen.</title>
        <authorList>
            <person name="Chen C.-Y."/>
            <person name="Wu K.-M."/>
            <person name="Chang Y.-C."/>
            <person name="Chang C.-H."/>
            <person name="Tsai H.-C."/>
            <person name="Liao T.-L."/>
            <person name="Liu Y.-M."/>
            <person name="Chen H.-J."/>
            <person name="Shen A.B.-T."/>
            <person name="Li J.-C."/>
            <person name="Su T.-L."/>
            <person name="Shao C.-P."/>
            <person name="Lee C.-T."/>
            <person name="Hor L.-I."/>
            <person name="Tsai S.-F."/>
        </authorList>
    </citation>
    <scope>NUCLEOTIDE SEQUENCE [LARGE SCALE GENOMIC DNA]</scope>
    <source>
        <strain>YJ016</strain>
    </source>
</reference>
<accession>Q7MIT6</accession>
<gene>
    <name evidence="1" type="primary">pdxB</name>
    <name type="ordered locus">VV2428</name>
</gene>
<keyword id="KW-0963">Cytoplasm</keyword>
<keyword id="KW-0520">NAD</keyword>
<keyword id="KW-0560">Oxidoreductase</keyword>
<keyword id="KW-0664">Pyridoxine biosynthesis</keyword>
<protein>
    <recommendedName>
        <fullName evidence="1">Erythronate-4-phosphate dehydrogenase</fullName>
        <ecNumber evidence="1">1.1.1.290</ecNumber>
    </recommendedName>
</protein>
<evidence type="ECO:0000255" key="1">
    <source>
        <dbReference type="HAMAP-Rule" id="MF_01825"/>
    </source>
</evidence>
<evidence type="ECO:0000305" key="2"/>